<gene>
    <name evidence="5" type="primary">LUC3</name>
</gene>
<protein>
    <recommendedName>
        <fullName evidence="5">Aldehyde dehydrogenase LUC3</fullName>
        <ecNumber evidence="4">1.2.1.3</ecNumber>
    </recommendedName>
    <alternativeName>
        <fullName evidence="5">Lucilactaene biosynthesis cluster protein 3</fullName>
    </alternativeName>
</protein>
<proteinExistence type="evidence at protein level"/>
<dbReference type="EC" id="1.2.1.3" evidence="4"/>
<dbReference type="EMBL" id="LC515193">
    <property type="protein sequence ID" value="BBQ09590.1"/>
    <property type="molecule type" value="Genomic_DNA"/>
</dbReference>
<dbReference type="SMR" id="A0A6J4B898"/>
<dbReference type="GO" id="GO:0016620">
    <property type="term" value="F:oxidoreductase activity, acting on the aldehyde or oxo group of donors, NAD or NADP as acceptor"/>
    <property type="evidence" value="ECO:0007669"/>
    <property type="project" value="InterPro"/>
</dbReference>
<dbReference type="CDD" id="cd07106">
    <property type="entry name" value="ALDH_AldA-AAD23400"/>
    <property type="match status" value="1"/>
</dbReference>
<dbReference type="FunFam" id="3.40.605.10:FF:000007">
    <property type="entry name" value="NAD/NADP-dependent betaine aldehyde dehydrogenase"/>
    <property type="match status" value="1"/>
</dbReference>
<dbReference type="Gene3D" id="3.40.605.10">
    <property type="entry name" value="Aldehyde Dehydrogenase, Chain A, domain 1"/>
    <property type="match status" value="1"/>
</dbReference>
<dbReference type="Gene3D" id="3.40.309.10">
    <property type="entry name" value="Aldehyde Dehydrogenase, Chain A, domain 2"/>
    <property type="match status" value="1"/>
</dbReference>
<dbReference type="InterPro" id="IPR016161">
    <property type="entry name" value="Ald_DH/histidinol_DH"/>
</dbReference>
<dbReference type="InterPro" id="IPR016163">
    <property type="entry name" value="Ald_DH_C"/>
</dbReference>
<dbReference type="InterPro" id="IPR016162">
    <property type="entry name" value="Ald_DH_N"/>
</dbReference>
<dbReference type="InterPro" id="IPR015590">
    <property type="entry name" value="Aldehyde_DH_dom"/>
</dbReference>
<dbReference type="InterPro" id="IPR044086">
    <property type="entry name" value="LUC3-like"/>
</dbReference>
<dbReference type="PANTHER" id="PTHR11699">
    <property type="entry name" value="ALDEHYDE DEHYDROGENASE-RELATED"/>
    <property type="match status" value="1"/>
</dbReference>
<dbReference type="Pfam" id="PF00171">
    <property type="entry name" value="Aldedh"/>
    <property type="match status" value="1"/>
</dbReference>
<dbReference type="SUPFAM" id="SSF53720">
    <property type="entry name" value="ALDH-like"/>
    <property type="match status" value="1"/>
</dbReference>
<organism>
    <name type="scientific">Fusarium sp</name>
    <dbReference type="NCBI Taxonomy" id="29916"/>
    <lineage>
        <taxon>Eukaryota</taxon>
        <taxon>Fungi</taxon>
        <taxon>Dikarya</taxon>
        <taxon>Ascomycota</taxon>
        <taxon>Pezizomycotina</taxon>
        <taxon>Sordariomycetes</taxon>
        <taxon>Hypocreomycetidae</taxon>
        <taxon>Hypocreales</taxon>
        <taxon>Nectriaceae</taxon>
        <taxon>Fusarium</taxon>
    </lineage>
</organism>
<feature type="chain" id="PRO_0000454635" description="Aldehyde dehydrogenase LUC3">
    <location>
        <begin position="1"/>
        <end position="461"/>
    </location>
</feature>
<feature type="active site" evidence="2">
    <location>
        <position position="237"/>
    </location>
</feature>
<feature type="active site" evidence="2">
    <location>
        <position position="271"/>
    </location>
</feature>
<feature type="binding site" evidence="1">
    <location>
        <begin position="215"/>
        <end position="220"/>
    </location>
    <ligand>
        <name>NAD(+)</name>
        <dbReference type="ChEBI" id="CHEBI:57540"/>
    </ligand>
</feature>
<keyword id="KW-0520">NAD</keyword>
<keyword id="KW-0560">Oxidoreductase</keyword>
<comment type="function">
    <text evidence="3 4 7">Aldehyde dehydrogenase; part of the gene cluster that mediates the biosynthesis of the mycotoxin lucilactaene and the lucilactaene-related compound NG-391 that act as cell cycle inhibitors with potent growth inhibitory activity against malarial parasites, moderate growth inhibitory activity against cancer cells, and no activity against bacteria and fungi (PubMed:32043422, PubMed:35484225). LUC3 is important for lucilactaene biosynthesis and performs the oxidation of the C-20 alcoholic analog prelucilactaene G into a carboxylic derivative that has still to be identified (PubMed:35484225). The pathway begins with the hybrid PKS-NRPS synthetase LUC5 which is responsible for the condensation of one acetyl-coenzyme A (CoA) unit with six malonyl-CoA units and the amide linkage of the arising heptaketide and homoserine, subsequently releasing the first intermediate prelucilactaene B. Both the cytochrome P450 monooxygenase LUC2 and the hydrolase LUC6 function in parallel in modification of prelucilactaene B. LUC6 may catalyze the 2-pyrrolidone ring formation to form prelucilactaene C from prelucilactaene B, followed by C-15 hydroxylation by the same enzyme to give prelucilactaene D, which is then converted to prelucilactaene E by epoxidation, and finally to prelucilactaene F by cyclization. Prelucilactane D, prelucilactaene E, and prelucilactaene F can be converted to dihydrolucilactaene, NG391, and lucilactaene, respectively, via C-20 methyl group hydroxylation by the cytochrome P450 monooxygenase LUC2. However, LUC2, unlike FUS8 in fusarin C biosynthesis, is not enough for the full oxidation of the C-20 methyl group into carboxylic acid, which is a prerequisite for the final methylation step. The aldehyde dehydrogenase LUC3 is involved in the biosynthesis by further oxidation of the C-20 alcoholic analog prelucilactaene G into a carboxylic derivative. This unidentified carboxylic derivative may be converted to demethyllucilactaene. As the last step, the methyltransferase LUC1 methylates the hydroxyl group at C-21 of demethyllucilactaene to generate lucilactaene (Probable).</text>
</comment>
<comment type="catalytic activity">
    <reaction evidence="1">
        <text>an aldehyde + NAD(+) + H2O = a carboxylate + NADH + 2 H(+)</text>
        <dbReference type="Rhea" id="RHEA:16185"/>
        <dbReference type="ChEBI" id="CHEBI:15377"/>
        <dbReference type="ChEBI" id="CHEBI:15378"/>
        <dbReference type="ChEBI" id="CHEBI:17478"/>
        <dbReference type="ChEBI" id="CHEBI:29067"/>
        <dbReference type="ChEBI" id="CHEBI:57540"/>
        <dbReference type="ChEBI" id="CHEBI:57945"/>
        <dbReference type="EC" id="1.2.1.3"/>
    </reaction>
</comment>
<comment type="pathway">
    <text evidence="4">Mycotoxin biosynthesis.</text>
</comment>
<comment type="disruption phenotype">
    <text evidence="4">Abolishes the production of lucilactaene and NG-391, and leads to the accumulation of prelucilactaene G and prelucilactaene H.</text>
</comment>
<comment type="similarity">
    <text evidence="6">Belongs to the aldehyde dehydrogenase family.</text>
</comment>
<name>LUC3_FUSSX</name>
<evidence type="ECO:0000250" key="1">
    <source>
        <dbReference type="UniProtKB" id="O34660"/>
    </source>
</evidence>
<evidence type="ECO:0000255" key="2">
    <source>
        <dbReference type="PROSITE-ProRule" id="PRU10007"/>
    </source>
</evidence>
<evidence type="ECO:0000269" key="3">
    <source>
    </source>
</evidence>
<evidence type="ECO:0000269" key="4">
    <source>
    </source>
</evidence>
<evidence type="ECO:0000303" key="5">
    <source>
    </source>
</evidence>
<evidence type="ECO:0000305" key="6"/>
<evidence type="ECO:0000305" key="7">
    <source>
    </source>
</evidence>
<accession>A0A6J4B898</accession>
<reference key="1">
    <citation type="journal article" date="2020" name="Biosci. Biotechnol. Biochem.">
        <title>Biosynthetic gene cluster identification and biological activity of lucilactaene from Fusarium sp. RK97-94.</title>
        <authorList>
            <person name="Kato S."/>
            <person name="Motoyama T."/>
            <person name="Futamura Y."/>
            <person name="Uramoto M."/>
            <person name="Nogawa T."/>
            <person name="Hayashi T."/>
            <person name="Hirota H."/>
            <person name="Tanaka A."/>
            <person name="Takahashi-Ando N."/>
            <person name="Kamakura T."/>
            <person name="Osada H."/>
        </authorList>
    </citation>
    <scope>NUCLEOTIDE SEQUENCE [GENOMIC DNA]</scope>
    <scope>FUNCTION</scope>
    <source>
        <strain>RK97-94</strain>
    </source>
</reference>
<reference key="2">
    <citation type="journal article" date="2022" name="J. Antibiot.">
        <title>Isolation of new lucilactaene derivatives from P450 monooxygenase and aldehyde dehydrogenase knockout Fusarium sp. RK97-94 strains and their biological activities.</title>
        <authorList>
            <person name="Abdelhakim I.A."/>
            <person name="Motoyama T."/>
            <person name="Nogawa T."/>
            <person name="Mahmud F.B."/>
            <person name="Futamura Y."/>
            <person name="Takahashi S."/>
            <person name="Osada H."/>
        </authorList>
    </citation>
    <scope>FUNCTION</scope>
    <scope>DISRUPTION PHENOTYPE</scope>
    <scope>CATALYTIC ACTIVITY</scope>
    <scope>PATHWAY</scope>
</reference>
<sequence>MDFTTFHNIIGGKPRGSDNSHSGVDPLTRTTLWPVPTASPQDVDDAVEAAQRALPAWSQASYDERTGLLEKFADLYLSRAGDFCQLLASECGRTVENAAIEVYWAAQWLRYPSSYKLPEEQIEDDTKTAIVTYEPLGVVAAICPWNSIGKIAPALATGNCVILKPSPFTPYTSLKLVELAQEVFPPSVIQVLSGGNGLGPALVKHPGIQKISFTGSTATGKQILKDGADTMKRITLETAGNNPAIILPDIDVTATVPHISGGLWFNAGQVCIAPRRLYIHADIFDVFVDALVETTKEATKEMTKIGPVQNELQFRKLVKTLDDAKSAGHDMATGGPLADAETGGFFLRPTIIKDASPESSIVSGEHFGPIVTCVRFSDADEAVHLANAGESGLAASIWTTNLTAAKALASRLDVGSVYINGPPQPDPRVPFGGHKQSGLGVEYGLQGLLSFCQTKAVYLYK</sequence>